<comment type="function">
    <text evidence="1">Required for rescue of stalled ribosomes mediated by trans-translation. Binds to transfer-messenger RNA (tmRNA), required for stable association of tmRNA with ribosomes. tmRNA and SmpB together mimic tRNA shape, replacing the anticodon stem-loop with SmpB. tmRNA is encoded by the ssrA gene; the 2 termini fold to resemble tRNA(Ala) and it encodes a 'tag peptide', a short internal open reading frame. During trans-translation Ala-aminoacylated tmRNA acts like a tRNA, entering the A-site of stalled ribosomes, displacing the stalled mRNA. The ribosome then switches to translate the ORF on the tmRNA; the nascent peptide is terminated with the 'tag peptide' encoded by the tmRNA and targeted for degradation. The ribosome is freed to recommence translation, which seems to be the essential function of trans-translation.</text>
</comment>
<comment type="subcellular location">
    <subcellularLocation>
        <location evidence="1">Cytoplasm</location>
    </subcellularLocation>
    <text evidence="1">The tmRNA-SmpB complex associates with stalled 70S ribosomes.</text>
</comment>
<comment type="similarity">
    <text evidence="1">Belongs to the SmpB family.</text>
</comment>
<reference key="1">
    <citation type="submission" date="2008-02" db="EMBL/GenBank/DDBJ databases">
        <title>Complete sequence of Escherichia coli C str. ATCC 8739.</title>
        <authorList>
            <person name="Copeland A."/>
            <person name="Lucas S."/>
            <person name="Lapidus A."/>
            <person name="Glavina del Rio T."/>
            <person name="Dalin E."/>
            <person name="Tice H."/>
            <person name="Bruce D."/>
            <person name="Goodwin L."/>
            <person name="Pitluck S."/>
            <person name="Kiss H."/>
            <person name="Brettin T."/>
            <person name="Detter J.C."/>
            <person name="Han C."/>
            <person name="Kuske C.R."/>
            <person name="Schmutz J."/>
            <person name="Larimer F."/>
            <person name="Land M."/>
            <person name="Hauser L."/>
            <person name="Kyrpides N."/>
            <person name="Mikhailova N."/>
            <person name="Ingram L."/>
            <person name="Richardson P."/>
        </authorList>
    </citation>
    <scope>NUCLEOTIDE SEQUENCE [LARGE SCALE GENOMIC DNA]</scope>
    <source>
        <strain>ATCC 8739 / DSM 1576 / NBRC 3972 / NCIMB 8545 / WDCM 00012 / Crooks</strain>
    </source>
</reference>
<keyword id="KW-0963">Cytoplasm</keyword>
<keyword id="KW-0694">RNA-binding</keyword>
<proteinExistence type="inferred from homology"/>
<gene>
    <name evidence="1" type="primary">smpB</name>
    <name type="ordered locus">EcolC_1064</name>
</gene>
<organism>
    <name type="scientific">Escherichia coli (strain ATCC 8739 / DSM 1576 / NBRC 3972 / NCIMB 8545 / WDCM 00012 / Crooks)</name>
    <dbReference type="NCBI Taxonomy" id="481805"/>
    <lineage>
        <taxon>Bacteria</taxon>
        <taxon>Pseudomonadati</taxon>
        <taxon>Pseudomonadota</taxon>
        <taxon>Gammaproteobacteria</taxon>
        <taxon>Enterobacterales</taxon>
        <taxon>Enterobacteriaceae</taxon>
        <taxon>Escherichia</taxon>
    </lineage>
</organism>
<evidence type="ECO:0000255" key="1">
    <source>
        <dbReference type="HAMAP-Rule" id="MF_00023"/>
    </source>
</evidence>
<sequence>MTKKKAHKPGSATIALNKRARHEYFIEEEFEAGLALQGWEVKSLRAGKANISDSYVLLRDGEAFLFGANITPMAVASTHVVCDPTRTRKLLLNQRELDSLYGRVNREGYTVVALSLYWKNAWCKVKIGVAKGKKQHDKRSDIKEREWQVDKARIMKNAHR</sequence>
<accession>B1IVL4</accession>
<name>SSRP_ECOLC</name>
<dbReference type="EMBL" id="CP000946">
    <property type="protein sequence ID" value="ACA76731.1"/>
    <property type="molecule type" value="Genomic_DNA"/>
</dbReference>
<dbReference type="RefSeq" id="WP_000162574.1">
    <property type="nucleotide sequence ID" value="NZ_MTFT01000037.1"/>
</dbReference>
<dbReference type="SMR" id="B1IVL4"/>
<dbReference type="GeneID" id="93774470"/>
<dbReference type="KEGG" id="ecl:EcolC_1064"/>
<dbReference type="HOGENOM" id="CLU_108953_3_0_6"/>
<dbReference type="GO" id="GO:0005829">
    <property type="term" value="C:cytosol"/>
    <property type="evidence" value="ECO:0007669"/>
    <property type="project" value="TreeGrafter"/>
</dbReference>
<dbReference type="GO" id="GO:0003723">
    <property type="term" value="F:RNA binding"/>
    <property type="evidence" value="ECO:0007669"/>
    <property type="project" value="UniProtKB-UniRule"/>
</dbReference>
<dbReference type="GO" id="GO:0070929">
    <property type="term" value="P:trans-translation"/>
    <property type="evidence" value="ECO:0007669"/>
    <property type="project" value="UniProtKB-UniRule"/>
</dbReference>
<dbReference type="CDD" id="cd09294">
    <property type="entry name" value="SmpB"/>
    <property type="match status" value="1"/>
</dbReference>
<dbReference type="FunFam" id="2.40.280.10:FF:000001">
    <property type="entry name" value="SsrA-binding protein"/>
    <property type="match status" value="1"/>
</dbReference>
<dbReference type="Gene3D" id="2.40.280.10">
    <property type="match status" value="1"/>
</dbReference>
<dbReference type="HAMAP" id="MF_00023">
    <property type="entry name" value="SmpB"/>
    <property type="match status" value="1"/>
</dbReference>
<dbReference type="InterPro" id="IPR023620">
    <property type="entry name" value="SmpB"/>
</dbReference>
<dbReference type="InterPro" id="IPR000037">
    <property type="entry name" value="SsrA-bd_prot"/>
</dbReference>
<dbReference type="InterPro" id="IPR020081">
    <property type="entry name" value="SsrA-bd_prot_CS"/>
</dbReference>
<dbReference type="NCBIfam" id="NF003843">
    <property type="entry name" value="PRK05422.1"/>
    <property type="match status" value="1"/>
</dbReference>
<dbReference type="NCBIfam" id="TIGR00086">
    <property type="entry name" value="smpB"/>
    <property type="match status" value="1"/>
</dbReference>
<dbReference type="PANTHER" id="PTHR30308:SF2">
    <property type="entry name" value="SSRA-BINDING PROTEIN"/>
    <property type="match status" value="1"/>
</dbReference>
<dbReference type="PANTHER" id="PTHR30308">
    <property type="entry name" value="TMRNA-BINDING COMPONENT OF TRANS-TRANSLATION TAGGING COMPLEX"/>
    <property type="match status" value="1"/>
</dbReference>
<dbReference type="Pfam" id="PF01668">
    <property type="entry name" value="SmpB"/>
    <property type="match status" value="1"/>
</dbReference>
<dbReference type="SUPFAM" id="SSF74982">
    <property type="entry name" value="Small protein B (SmpB)"/>
    <property type="match status" value="1"/>
</dbReference>
<dbReference type="PROSITE" id="PS01317">
    <property type="entry name" value="SSRP"/>
    <property type="match status" value="1"/>
</dbReference>
<feature type="chain" id="PRO_1000074350" description="SsrA-binding protein">
    <location>
        <begin position="1"/>
        <end position="160"/>
    </location>
</feature>
<protein>
    <recommendedName>
        <fullName evidence="1">SsrA-binding protein</fullName>
    </recommendedName>
    <alternativeName>
        <fullName evidence="1">Small protein B</fullName>
    </alternativeName>
</protein>